<keyword id="KW-1185">Reference proteome</keyword>
<reference key="1">
    <citation type="journal article" date="1998" name="Nature">
        <title>Deciphering the biology of Mycobacterium tuberculosis from the complete genome sequence.</title>
        <authorList>
            <person name="Cole S.T."/>
            <person name="Brosch R."/>
            <person name="Parkhill J."/>
            <person name="Garnier T."/>
            <person name="Churcher C.M."/>
            <person name="Harris D.E."/>
            <person name="Gordon S.V."/>
            <person name="Eiglmeier K."/>
            <person name="Gas S."/>
            <person name="Barry C.E. III"/>
            <person name="Tekaia F."/>
            <person name="Badcock K."/>
            <person name="Basham D."/>
            <person name="Brown D."/>
            <person name="Chillingworth T."/>
            <person name="Connor R."/>
            <person name="Davies R.M."/>
            <person name="Devlin K."/>
            <person name="Feltwell T."/>
            <person name="Gentles S."/>
            <person name="Hamlin N."/>
            <person name="Holroyd S."/>
            <person name="Hornsby T."/>
            <person name="Jagels K."/>
            <person name="Krogh A."/>
            <person name="McLean J."/>
            <person name="Moule S."/>
            <person name="Murphy L.D."/>
            <person name="Oliver S."/>
            <person name="Osborne J."/>
            <person name="Quail M.A."/>
            <person name="Rajandream M.A."/>
            <person name="Rogers J."/>
            <person name="Rutter S."/>
            <person name="Seeger K."/>
            <person name="Skelton S."/>
            <person name="Squares S."/>
            <person name="Squares R."/>
            <person name="Sulston J.E."/>
            <person name="Taylor K."/>
            <person name="Whitehead S."/>
            <person name="Barrell B.G."/>
        </authorList>
    </citation>
    <scope>NUCLEOTIDE SEQUENCE [LARGE SCALE GENOMIC DNA]</scope>
    <source>
        <strain>ATCC 25618 / H37Rv</strain>
    </source>
</reference>
<proteinExistence type="inferred from homology"/>
<feature type="chain" id="PRO_0000379118" description="Uncharacterized PPE family protein PPE63">
    <location>
        <begin position="1"/>
        <end position="479"/>
    </location>
</feature>
<feature type="domain" description="PE-PPE" evidence="1">
    <location>
        <begin position="240"/>
        <end position="462"/>
    </location>
</feature>
<feature type="region of interest" description="Disordered" evidence="2">
    <location>
        <begin position="180"/>
        <end position="203"/>
    </location>
</feature>
<feature type="compositionally biased region" description="Polar residues" evidence="2">
    <location>
        <begin position="187"/>
        <end position="202"/>
    </location>
</feature>
<accession>P9WHX5</accession>
<accession>L0TFR2</accession>
<accession>Q6MWW1</accession>
<accession>Q7D5B9</accession>
<sequence>MADFLTLSPEVNSARMYAGGGPGSLSAAAAAWDELAAELWLAAASFESVCSGLADRWWQGPSSRMMAAQAARHTGWLAAAATQAEGAASQAQTMALAYEAAFAATVHPALVAANRALVAWLAGSNVFGQNTPAIAAAEAIYEQMWAQDVVAMLNYHAVASAVGARLRPWQQLLHELPRRLGGEHSDSTNTELANPSSTTTRITVPGASPVHAATLLPFIGRLLAARYAELNTAIGTNWFPGTTPEVVSYPATIGVLSGSLGAVDANQSIAIGQQMLHNEILAATASGQPVTVAGLSMGSMVIDRELAYLAIDPNAPPSSALTFVELAGPERGLAQTYLPVGTTIPIAGYTVGNAPESQYNTSVVYSQYDIWADPPDRPWNLLAGANALMGAAYFHDLTAYAAPQQGIEIAAVTSSLGGTTTTYMIPSPTLPLLLPLKQIGVPDWIVGGLNNVLKPLVDAGYSQYAPTAGPYFSHGNLVW</sequence>
<organism>
    <name type="scientific">Mycobacterium tuberculosis (strain ATCC 25618 / H37Rv)</name>
    <dbReference type="NCBI Taxonomy" id="83332"/>
    <lineage>
        <taxon>Bacteria</taxon>
        <taxon>Bacillati</taxon>
        <taxon>Actinomycetota</taxon>
        <taxon>Actinomycetes</taxon>
        <taxon>Mycobacteriales</taxon>
        <taxon>Mycobacteriaceae</taxon>
        <taxon>Mycobacterium</taxon>
        <taxon>Mycobacterium tuberculosis complex</taxon>
    </lineage>
</organism>
<evidence type="ECO:0000255" key="1"/>
<evidence type="ECO:0000256" key="2">
    <source>
        <dbReference type="SAM" id="MobiDB-lite"/>
    </source>
</evidence>
<evidence type="ECO:0000305" key="3"/>
<protein>
    <recommendedName>
        <fullName>Uncharacterized PPE family protein PPE63</fullName>
    </recommendedName>
</protein>
<comment type="similarity">
    <text evidence="3">Belongs to the mycobacterial PPE family.</text>
</comment>
<dbReference type="EMBL" id="AL123456">
    <property type="protein sequence ID" value="CCP46361.1"/>
    <property type="molecule type" value="Genomic_DNA"/>
</dbReference>
<dbReference type="PIR" id="D70676">
    <property type="entry name" value="D70676"/>
</dbReference>
<dbReference type="RefSeq" id="WP_003900090.1">
    <property type="nucleotide sequence ID" value="NZ_NVQJ01000014.1"/>
</dbReference>
<dbReference type="RefSeq" id="YP_177987.1">
    <property type="nucleotide sequence ID" value="NC_000962.3"/>
</dbReference>
<dbReference type="SMR" id="P9WHX5"/>
<dbReference type="STRING" id="83332.Rv3539"/>
<dbReference type="ESTHER" id="myctu-ppe63">
    <property type="family name" value="PE-PPE"/>
</dbReference>
<dbReference type="PaxDb" id="83332-Rv3539"/>
<dbReference type="DNASU" id="888438"/>
<dbReference type="GeneID" id="888438"/>
<dbReference type="KEGG" id="mtu:Rv3539"/>
<dbReference type="KEGG" id="mtv:RVBD_3539"/>
<dbReference type="TubercuList" id="Rv3539"/>
<dbReference type="eggNOG" id="COG5651">
    <property type="taxonomic scope" value="Bacteria"/>
</dbReference>
<dbReference type="InParanoid" id="P9WHX5"/>
<dbReference type="OrthoDB" id="4749975at2"/>
<dbReference type="PhylomeDB" id="P9WHX5"/>
<dbReference type="Proteomes" id="UP000001584">
    <property type="component" value="Chromosome"/>
</dbReference>
<dbReference type="GO" id="GO:0005886">
    <property type="term" value="C:plasma membrane"/>
    <property type="evidence" value="ECO:0007005"/>
    <property type="project" value="MTBBASE"/>
</dbReference>
<dbReference type="GO" id="GO:0052572">
    <property type="term" value="P:response to host immune response"/>
    <property type="evidence" value="ECO:0000318"/>
    <property type="project" value="GO_Central"/>
</dbReference>
<dbReference type="FunFam" id="1.20.1260.20:FF:000001">
    <property type="entry name" value="PPE family protein PPE41"/>
    <property type="match status" value="1"/>
</dbReference>
<dbReference type="Gene3D" id="3.40.50.1820">
    <property type="entry name" value="alpha/beta hydrolase"/>
    <property type="match status" value="1"/>
</dbReference>
<dbReference type="Gene3D" id="1.20.1260.20">
    <property type="entry name" value="PPE superfamily"/>
    <property type="match status" value="1"/>
</dbReference>
<dbReference type="InterPro" id="IPR029058">
    <property type="entry name" value="AB_hydrolase_fold"/>
</dbReference>
<dbReference type="InterPro" id="IPR013228">
    <property type="entry name" value="PE-PPE_C"/>
</dbReference>
<dbReference type="InterPro" id="IPR000030">
    <property type="entry name" value="PPE_dom"/>
</dbReference>
<dbReference type="InterPro" id="IPR038332">
    <property type="entry name" value="PPE_sf"/>
</dbReference>
<dbReference type="PANTHER" id="PTHR46766">
    <property type="entry name" value="GLUTAMINE-RICH PROTEIN 2"/>
    <property type="match status" value="1"/>
</dbReference>
<dbReference type="PANTHER" id="PTHR46766:SF1">
    <property type="entry name" value="GLUTAMINE-RICH PROTEIN 2"/>
    <property type="match status" value="1"/>
</dbReference>
<dbReference type="Pfam" id="PF08237">
    <property type="entry name" value="PE-PPE"/>
    <property type="match status" value="1"/>
</dbReference>
<dbReference type="Pfam" id="PF00823">
    <property type="entry name" value="PPE"/>
    <property type="match status" value="1"/>
</dbReference>
<dbReference type="SUPFAM" id="SSF140459">
    <property type="entry name" value="PE/PPE dimer-like"/>
    <property type="match status" value="1"/>
</dbReference>
<name>PPE63_MYCTU</name>
<gene>
    <name type="primary">PPE63</name>
    <name type="ordered locus">Rv3539</name>
</gene>